<proteinExistence type="inferred from homology"/>
<name>LEXA_CUPTR</name>
<protein>
    <recommendedName>
        <fullName evidence="1">LexA repressor</fullName>
        <ecNumber evidence="1">3.4.21.88</ecNumber>
    </recommendedName>
</protein>
<sequence>MATLTPRQQQIFDLIRNTIRRTGFPPTRAEIAAEFGFSSPNAAEEHLRALARKGVIELTPGASRGIRLKVSRSDSELPDQFSLPMAGVLQLTLPLVGRVAAGSPILAAEHIDRQYQVDASVFDERPDYLLRVRGLSMRDAGILDGDLLAVRRASEAANGKIVVARLGDDVTVKRLQRRGGHIELIAENPDFTNIIVEPGEEFSLEGIAVGLIRSSGF</sequence>
<keyword id="KW-0068">Autocatalytic cleavage</keyword>
<keyword id="KW-0227">DNA damage</keyword>
<keyword id="KW-0234">DNA repair</keyword>
<keyword id="KW-0235">DNA replication</keyword>
<keyword id="KW-0238">DNA-binding</keyword>
<keyword id="KW-0378">Hydrolase</keyword>
<keyword id="KW-0678">Repressor</keyword>
<keyword id="KW-0742">SOS response</keyword>
<keyword id="KW-0804">Transcription</keyword>
<keyword id="KW-0805">Transcription regulation</keyword>
<reference key="1">
    <citation type="journal article" date="2008" name="Genome Res.">
        <title>Genome sequence of the beta-rhizobium Cupriavidus taiwanensis and comparative genomics of rhizobia.</title>
        <authorList>
            <person name="Amadou C."/>
            <person name="Pascal G."/>
            <person name="Mangenot S."/>
            <person name="Glew M."/>
            <person name="Bontemps C."/>
            <person name="Capela D."/>
            <person name="Carrere S."/>
            <person name="Cruveiller S."/>
            <person name="Dossat C."/>
            <person name="Lajus A."/>
            <person name="Marchetti M."/>
            <person name="Poinsot V."/>
            <person name="Rouy Z."/>
            <person name="Servin B."/>
            <person name="Saad M."/>
            <person name="Schenowitz C."/>
            <person name="Barbe V."/>
            <person name="Batut J."/>
            <person name="Medigue C."/>
            <person name="Masson-Boivin C."/>
        </authorList>
    </citation>
    <scope>NUCLEOTIDE SEQUENCE [LARGE SCALE GENOMIC DNA]</scope>
    <source>
        <strain>DSM 17343 / BCRC 17206 / CCUG 44338 / CIP 107171 / LMG 19424 / R1</strain>
    </source>
</reference>
<comment type="function">
    <text evidence="1">Represses a number of genes involved in the response to DNA damage (SOS response), including recA and lexA. In the presence of single-stranded DNA, RecA interacts with LexA causing an autocatalytic cleavage which disrupts the DNA-binding part of LexA, leading to derepression of the SOS regulon and eventually DNA repair.</text>
</comment>
<comment type="catalytic activity">
    <reaction evidence="1">
        <text>Hydrolysis of Ala-|-Gly bond in repressor LexA.</text>
        <dbReference type="EC" id="3.4.21.88"/>
    </reaction>
</comment>
<comment type="subunit">
    <text evidence="1">Homodimer.</text>
</comment>
<comment type="similarity">
    <text evidence="1">Belongs to the peptidase S24 family.</text>
</comment>
<evidence type="ECO:0000255" key="1">
    <source>
        <dbReference type="HAMAP-Rule" id="MF_00015"/>
    </source>
</evidence>
<dbReference type="EC" id="3.4.21.88" evidence="1"/>
<dbReference type="EMBL" id="CU633749">
    <property type="protein sequence ID" value="CAQ69767.1"/>
    <property type="molecule type" value="Genomic_DNA"/>
</dbReference>
<dbReference type="RefSeq" id="WP_012353084.1">
    <property type="nucleotide sequence ID" value="NC_010528.1"/>
</dbReference>
<dbReference type="SMR" id="B3R2P9"/>
<dbReference type="MEROPS" id="S24.001"/>
<dbReference type="GeneID" id="29761547"/>
<dbReference type="KEGG" id="cti:RALTA_A1825"/>
<dbReference type="eggNOG" id="COG1974">
    <property type="taxonomic scope" value="Bacteria"/>
</dbReference>
<dbReference type="HOGENOM" id="CLU_066192_45_3_4"/>
<dbReference type="BioCyc" id="CTAI977880:RALTA_RS08800-MONOMER"/>
<dbReference type="Proteomes" id="UP000001692">
    <property type="component" value="Chromosome 1"/>
</dbReference>
<dbReference type="GO" id="GO:0003677">
    <property type="term" value="F:DNA binding"/>
    <property type="evidence" value="ECO:0007669"/>
    <property type="project" value="UniProtKB-UniRule"/>
</dbReference>
<dbReference type="GO" id="GO:0004252">
    <property type="term" value="F:serine-type endopeptidase activity"/>
    <property type="evidence" value="ECO:0007669"/>
    <property type="project" value="UniProtKB-UniRule"/>
</dbReference>
<dbReference type="GO" id="GO:0006281">
    <property type="term" value="P:DNA repair"/>
    <property type="evidence" value="ECO:0007669"/>
    <property type="project" value="UniProtKB-UniRule"/>
</dbReference>
<dbReference type="GO" id="GO:0006260">
    <property type="term" value="P:DNA replication"/>
    <property type="evidence" value="ECO:0007669"/>
    <property type="project" value="UniProtKB-UniRule"/>
</dbReference>
<dbReference type="GO" id="GO:0045892">
    <property type="term" value="P:negative regulation of DNA-templated transcription"/>
    <property type="evidence" value="ECO:0007669"/>
    <property type="project" value="UniProtKB-UniRule"/>
</dbReference>
<dbReference type="GO" id="GO:0006508">
    <property type="term" value="P:proteolysis"/>
    <property type="evidence" value="ECO:0007669"/>
    <property type="project" value="InterPro"/>
</dbReference>
<dbReference type="GO" id="GO:0009432">
    <property type="term" value="P:SOS response"/>
    <property type="evidence" value="ECO:0007669"/>
    <property type="project" value="UniProtKB-UniRule"/>
</dbReference>
<dbReference type="CDD" id="cd06529">
    <property type="entry name" value="S24_LexA-like"/>
    <property type="match status" value="1"/>
</dbReference>
<dbReference type="FunFam" id="1.10.10.10:FF:000009">
    <property type="entry name" value="LexA repressor"/>
    <property type="match status" value="1"/>
</dbReference>
<dbReference type="FunFam" id="2.10.109.10:FF:000001">
    <property type="entry name" value="LexA repressor"/>
    <property type="match status" value="1"/>
</dbReference>
<dbReference type="Gene3D" id="2.10.109.10">
    <property type="entry name" value="Umud Fragment, subunit A"/>
    <property type="match status" value="1"/>
</dbReference>
<dbReference type="Gene3D" id="1.10.10.10">
    <property type="entry name" value="Winged helix-like DNA-binding domain superfamily/Winged helix DNA-binding domain"/>
    <property type="match status" value="1"/>
</dbReference>
<dbReference type="HAMAP" id="MF_00015">
    <property type="entry name" value="LexA"/>
    <property type="match status" value="1"/>
</dbReference>
<dbReference type="InterPro" id="IPR006200">
    <property type="entry name" value="LexA"/>
</dbReference>
<dbReference type="InterPro" id="IPR039418">
    <property type="entry name" value="LexA-like"/>
</dbReference>
<dbReference type="InterPro" id="IPR036286">
    <property type="entry name" value="LexA/Signal_pep-like_sf"/>
</dbReference>
<dbReference type="InterPro" id="IPR006199">
    <property type="entry name" value="LexA_DNA-bd_dom"/>
</dbReference>
<dbReference type="InterPro" id="IPR050077">
    <property type="entry name" value="LexA_repressor"/>
</dbReference>
<dbReference type="InterPro" id="IPR006197">
    <property type="entry name" value="Peptidase_S24_LexA"/>
</dbReference>
<dbReference type="InterPro" id="IPR015927">
    <property type="entry name" value="Peptidase_S24_S26A/B/C"/>
</dbReference>
<dbReference type="InterPro" id="IPR036388">
    <property type="entry name" value="WH-like_DNA-bd_sf"/>
</dbReference>
<dbReference type="InterPro" id="IPR036390">
    <property type="entry name" value="WH_DNA-bd_sf"/>
</dbReference>
<dbReference type="NCBIfam" id="TIGR00498">
    <property type="entry name" value="lexA"/>
    <property type="match status" value="1"/>
</dbReference>
<dbReference type="PANTHER" id="PTHR33516">
    <property type="entry name" value="LEXA REPRESSOR"/>
    <property type="match status" value="1"/>
</dbReference>
<dbReference type="PANTHER" id="PTHR33516:SF2">
    <property type="entry name" value="LEXA REPRESSOR-RELATED"/>
    <property type="match status" value="1"/>
</dbReference>
<dbReference type="Pfam" id="PF01726">
    <property type="entry name" value="LexA_DNA_bind"/>
    <property type="match status" value="1"/>
</dbReference>
<dbReference type="Pfam" id="PF00717">
    <property type="entry name" value="Peptidase_S24"/>
    <property type="match status" value="1"/>
</dbReference>
<dbReference type="PRINTS" id="PR00726">
    <property type="entry name" value="LEXASERPTASE"/>
</dbReference>
<dbReference type="SUPFAM" id="SSF51306">
    <property type="entry name" value="LexA/Signal peptidase"/>
    <property type="match status" value="1"/>
</dbReference>
<dbReference type="SUPFAM" id="SSF46785">
    <property type="entry name" value="Winged helix' DNA-binding domain"/>
    <property type="match status" value="1"/>
</dbReference>
<gene>
    <name evidence="1" type="primary">lexA</name>
    <name type="ordered locus">RALTA_A1825</name>
</gene>
<accession>B3R2P9</accession>
<organism>
    <name type="scientific">Cupriavidus taiwanensis (strain DSM 17343 / BCRC 17206 / CCUG 44338 / CIP 107171 / LMG 19424 / R1)</name>
    <name type="common">Ralstonia taiwanensis (strain LMG 19424)</name>
    <dbReference type="NCBI Taxonomy" id="977880"/>
    <lineage>
        <taxon>Bacteria</taxon>
        <taxon>Pseudomonadati</taxon>
        <taxon>Pseudomonadota</taxon>
        <taxon>Betaproteobacteria</taxon>
        <taxon>Burkholderiales</taxon>
        <taxon>Burkholderiaceae</taxon>
        <taxon>Cupriavidus</taxon>
    </lineage>
</organism>
<feature type="chain" id="PRO_1000089559" description="LexA repressor">
    <location>
        <begin position="1"/>
        <end position="217"/>
    </location>
</feature>
<feature type="DNA-binding region" description="H-T-H motif" evidence="1">
    <location>
        <begin position="28"/>
        <end position="48"/>
    </location>
</feature>
<feature type="active site" description="For autocatalytic cleavage activity" evidence="1">
    <location>
        <position position="136"/>
    </location>
</feature>
<feature type="active site" description="For autocatalytic cleavage activity" evidence="1">
    <location>
        <position position="173"/>
    </location>
</feature>
<feature type="site" description="Cleavage; by autolysis" evidence="1">
    <location>
        <begin position="101"/>
        <end position="102"/>
    </location>
</feature>